<feature type="chain" id="PRO_0000130462" description="Large ribosomal subunit protein uL29">
    <location>
        <begin position="1"/>
        <end position="69"/>
    </location>
</feature>
<name>RL29_STAEQ</name>
<gene>
    <name evidence="1" type="primary">rpmC</name>
    <name type="ordered locus">SERP1823</name>
</gene>
<reference key="1">
    <citation type="journal article" date="2005" name="J. Bacteriol.">
        <title>Insights on evolution of virulence and resistance from the complete genome analysis of an early methicillin-resistant Staphylococcus aureus strain and a biofilm-producing methicillin-resistant Staphylococcus epidermidis strain.</title>
        <authorList>
            <person name="Gill S.R."/>
            <person name="Fouts D.E."/>
            <person name="Archer G.L."/>
            <person name="Mongodin E.F."/>
            <person name="DeBoy R.T."/>
            <person name="Ravel J."/>
            <person name="Paulsen I.T."/>
            <person name="Kolonay J.F."/>
            <person name="Brinkac L.M."/>
            <person name="Beanan M.J."/>
            <person name="Dodson R.J."/>
            <person name="Daugherty S.C."/>
            <person name="Madupu R."/>
            <person name="Angiuoli S.V."/>
            <person name="Durkin A.S."/>
            <person name="Haft D.H."/>
            <person name="Vamathevan J.J."/>
            <person name="Khouri H."/>
            <person name="Utterback T.R."/>
            <person name="Lee C."/>
            <person name="Dimitrov G."/>
            <person name="Jiang L."/>
            <person name="Qin H."/>
            <person name="Weidman J."/>
            <person name="Tran K."/>
            <person name="Kang K.H."/>
            <person name="Hance I.R."/>
            <person name="Nelson K.E."/>
            <person name="Fraser C.M."/>
        </authorList>
    </citation>
    <scope>NUCLEOTIDE SEQUENCE [LARGE SCALE GENOMIC DNA]</scope>
    <source>
        <strain>ATCC 35984 / DSM 28319 / BCRC 17069 / CCUG 31568 / BM 3577 / RP62A</strain>
    </source>
</reference>
<evidence type="ECO:0000255" key="1">
    <source>
        <dbReference type="HAMAP-Rule" id="MF_00374"/>
    </source>
</evidence>
<evidence type="ECO:0000305" key="2"/>
<organism>
    <name type="scientific">Staphylococcus epidermidis (strain ATCC 35984 / DSM 28319 / BCRC 17069 / CCUG 31568 / BM 3577 / RP62A)</name>
    <dbReference type="NCBI Taxonomy" id="176279"/>
    <lineage>
        <taxon>Bacteria</taxon>
        <taxon>Bacillati</taxon>
        <taxon>Bacillota</taxon>
        <taxon>Bacilli</taxon>
        <taxon>Bacillales</taxon>
        <taxon>Staphylococcaceae</taxon>
        <taxon>Staphylococcus</taxon>
    </lineage>
</organism>
<protein>
    <recommendedName>
        <fullName evidence="1">Large ribosomal subunit protein uL29</fullName>
    </recommendedName>
    <alternativeName>
        <fullName evidence="2">50S ribosomal protein L29</fullName>
    </alternativeName>
</protein>
<proteinExistence type="inferred from homology"/>
<comment type="similarity">
    <text evidence="1">Belongs to the universal ribosomal protein uL29 family.</text>
</comment>
<accession>Q5HM07</accession>
<keyword id="KW-1185">Reference proteome</keyword>
<keyword id="KW-0687">Ribonucleoprotein</keyword>
<keyword id="KW-0689">Ribosomal protein</keyword>
<dbReference type="EMBL" id="CP000029">
    <property type="protein sequence ID" value="AAW55155.1"/>
    <property type="molecule type" value="Genomic_DNA"/>
</dbReference>
<dbReference type="RefSeq" id="WP_000644737.1">
    <property type="nucleotide sequence ID" value="NC_002976.3"/>
</dbReference>
<dbReference type="SMR" id="Q5HM07"/>
<dbReference type="STRING" id="176279.SERP1823"/>
<dbReference type="GeneID" id="98346554"/>
<dbReference type="KEGG" id="ser:SERP1823"/>
<dbReference type="eggNOG" id="COG0255">
    <property type="taxonomic scope" value="Bacteria"/>
</dbReference>
<dbReference type="HOGENOM" id="CLU_158491_5_2_9"/>
<dbReference type="Proteomes" id="UP000000531">
    <property type="component" value="Chromosome"/>
</dbReference>
<dbReference type="GO" id="GO:0022625">
    <property type="term" value="C:cytosolic large ribosomal subunit"/>
    <property type="evidence" value="ECO:0007669"/>
    <property type="project" value="TreeGrafter"/>
</dbReference>
<dbReference type="GO" id="GO:0003735">
    <property type="term" value="F:structural constituent of ribosome"/>
    <property type="evidence" value="ECO:0007669"/>
    <property type="project" value="InterPro"/>
</dbReference>
<dbReference type="GO" id="GO:0006412">
    <property type="term" value="P:translation"/>
    <property type="evidence" value="ECO:0007669"/>
    <property type="project" value="UniProtKB-UniRule"/>
</dbReference>
<dbReference type="CDD" id="cd00427">
    <property type="entry name" value="Ribosomal_L29_HIP"/>
    <property type="match status" value="1"/>
</dbReference>
<dbReference type="FunFam" id="1.10.287.310:FF:000001">
    <property type="entry name" value="50S ribosomal protein L29"/>
    <property type="match status" value="1"/>
</dbReference>
<dbReference type="Gene3D" id="1.10.287.310">
    <property type="match status" value="1"/>
</dbReference>
<dbReference type="HAMAP" id="MF_00374">
    <property type="entry name" value="Ribosomal_uL29"/>
    <property type="match status" value="1"/>
</dbReference>
<dbReference type="InterPro" id="IPR050063">
    <property type="entry name" value="Ribosomal_protein_uL29"/>
</dbReference>
<dbReference type="InterPro" id="IPR001854">
    <property type="entry name" value="Ribosomal_uL29"/>
</dbReference>
<dbReference type="InterPro" id="IPR036049">
    <property type="entry name" value="Ribosomal_uL29_sf"/>
</dbReference>
<dbReference type="NCBIfam" id="TIGR00012">
    <property type="entry name" value="L29"/>
    <property type="match status" value="1"/>
</dbReference>
<dbReference type="PANTHER" id="PTHR10916">
    <property type="entry name" value="60S RIBOSOMAL PROTEIN L35/50S RIBOSOMAL PROTEIN L29"/>
    <property type="match status" value="1"/>
</dbReference>
<dbReference type="PANTHER" id="PTHR10916:SF0">
    <property type="entry name" value="LARGE RIBOSOMAL SUBUNIT PROTEIN UL29C"/>
    <property type="match status" value="1"/>
</dbReference>
<dbReference type="Pfam" id="PF00831">
    <property type="entry name" value="Ribosomal_L29"/>
    <property type="match status" value="1"/>
</dbReference>
<dbReference type="SUPFAM" id="SSF46561">
    <property type="entry name" value="Ribosomal protein L29 (L29p)"/>
    <property type="match status" value="1"/>
</dbReference>
<sequence>MKAKEIRDLTTSEIEEQIKSSKEELFNLRFQLATGQLEETARIRTVRKTIARLKTVAREREIEQSKANQ</sequence>